<evidence type="ECO:0000255" key="1">
    <source>
        <dbReference type="HAMAP-Rule" id="MF_01006"/>
    </source>
</evidence>
<comment type="function">
    <text evidence="1">Catalyzes the dephosphorylation of undecaprenyl diphosphate (UPP). Confers resistance to bacitracin.</text>
</comment>
<comment type="catalytic activity">
    <reaction evidence="1">
        <text>di-trans,octa-cis-undecaprenyl diphosphate + H2O = di-trans,octa-cis-undecaprenyl phosphate + phosphate + H(+)</text>
        <dbReference type="Rhea" id="RHEA:28094"/>
        <dbReference type="ChEBI" id="CHEBI:15377"/>
        <dbReference type="ChEBI" id="CHEBI:15378"/>
        <dbReference type="ChEBI" id="CHEBI:43474"/>
        <dbReference type="ChEBI" id="CHEBI:58405"/>
        <dbReference type="ChEBI" id="CHEBI:60392"/>
        <dbReference type="EC" id="3.6.1.27"/>
    </reaction>
</comment>
<comment type="subcellular location">
    <subcellularLocation>
        <location evidence="1">Cell inner membrane</location>
        <topology evidence="1">Multi-pass membrane protein</topology>
    </subcellularLocation>
</comment>
<comment type="miscellaneous">
    <text>Bacitracin is thought to be involved in the inhibition of peptidoglycan synthesis by sequestering undecaprenyl diphosphate, thereby reducing the pool of lipid carrier available.</text>
</comment>
<comment type="similarity">
    <text evidence="1">Belongs to the UppP family.</text>
</comment>
<feature type="chain" id="PRO_0000318866" description="Undecaprenyl-diphosphatase">
    <location>
        <begin position="1"/>
        <end position="266"/>
    </location>
</feature>
<feature type="transmembrane region" description="Helical" evidence="1">
    <location>
        <begin position="39"/>
        <end position="59"/>
    </location>
</feature>
<feature type="transmembrane region" description="Helical" evidence="1">
    <location>
        <begin position="86"/>
        <end position="106"/>
    </location>
</feature>
<feature type="transmembrane region" description="Helical" evidence="1">
    <location>
        <begin position="112"/>
        <end position="132"/>
    </location>
</feature>
<feature type="transmembrane region" description="Helical" evidence="1">
    <location>
        <begin position="153"/>
        <end position="173"/>
    </location>
</feature>
<feature type="transmembrane region" description="Helical" evidence="1">
    <location>
        <begin position="189"/>
        <end position="209"/>
    </location>
</feature>
<feature type="transmembrane region" description="Helical" evidence="1">
    <location>
        <begin position="216"/>
        <end position="236"/>
    </location>
</feature>
<feature type="transmembrane region" description="Helical" evidence="1">
    <location>
        <begin position="246"/>
        <end position="266"/>
    </location>
</feature>
<protein>
    <recommendedName>
        <fullName evidence="1">Undecaprenyl-diphosphatase</fullName>
        <ecNumber evidence="1">3.6.1.27</ecNumber>
    </recommendedName>
    <alternativeName>
        <fullName evidence="1">Bacitracin resistance protein</fullName>
    </alternativeName>
    <alternativeName>
        <fullName evidence="1">Undecaprenyl pyrophosphate phosphatase</fullName>
    </alternativeName>
</protein>
<reference key="1">
    <citation type="journal article" date="2007" name="PLoS Genet.">
        <title>Patterns and implications of gene gain and loss in the evolution of Prochlorococcus.</title>
        <authorList>
            <person name="Kettler G.C."/>
            <person name="Martiny A.C."/>
            <person name="Huang K."/>
            <person name="Zucker J."/>
            <person name="Coleman M.L."/>
            <person name="Rodrigue S."/>
            <person name="Chen F."/>
            <person name="Lapidus A."/>
            <person name="Ferriera S."/>
            <person name="Johnson J."/>
            <person name="Steglich C."/>
            <person name="Church G.M."/>
            <person name="Richardson P."/>
            <person name="Chisholm S.W."/>
        </authorList>
    </citation>
    <scope>NUCLEOTIDE SEQUENCE [LARGE SCALE GENOMIC DNA]</scope>
    <source>
        <strain>MIT 9215</strain>
    </source>
</reference>
<name>UPPP_PROM2</name>
<gene>
    <name evidence="1" type="primary">uppP</name>
    <name type="ordered locus">P9215_09341</name>
</gene>
<proteinExistence type="inferred from homology"/>
<accession>A8G4L8</accession>
<keyword id="KW-0046">Antibiotic resistance</keyword>
<keyword id="KW-0997">Cell inner membrane</keyword>
<keyword id="KW-1003">Cell membrane</keyword>
<keyword id="KW-0133">Cell shape</keyword>
<keyword id="KW-0961">Cell wall biogenesis/degradation</keyword>
<keyword id="KW-0378">Hydrolase</keyword>
<keyword id="KW-0472">Membrane</keyword>
<keyword id="KW-0573">Peptidoglycan synthesis</keyword>
<keyword id="KW-0812">Transmembrane</keyword>
<keyword id="KW-1133">Transmembrane helix</keyword>
<sequence length="266" mass="29743">MEYLRFILYGLIQGLTEFLPISSTAHLKIISIFLGIDDPGSSLSATIQLGSVLAIVWYFRNDIFNFRGQSSKNILYYFLHERLLRSIFIGTIPIVLLGGSVKLFVPNFIDNVLRSNLSIALVSIVMAFFMYLADSSKRGSIDIKNHNYSDSFLIGFFQALAIFPGVSRSGITISSALISGWERRDAAKFSFLLGMPAISLAAIVEFIFSFNEFFSIGFLPLLVGLMTTFLSSLLAIDFLLRYFSSNGLKIFIIYRVIFGVVILLNL</sequence>
<organism>
    <name type="scientific">Prochlorococcus marinus (strain MIT 9215)</name>
    <dbReference type="NCBI Taxonomy" id="93060"/>
    <lineage>
        <taxon>Bacteria</taxon>
        <taxon>Bacillati</taxon>
        <taxon>Cyanobacteriota</taxon>
        <taxon>Cyanophyceae</taxon>
        <taxon>Synechococcales</taxon>
        <taxon>Prochlorococcaceae</taxon>
        <taxon>Prochlorococcus</taxon>
    </lineage>
</organism>
<dbReference type="EC" id="3.6.1.27" evidence="1"/>
<dbReference type="EMBL" id="CP000825">
    <property type="protein sequence ID" value="ABV50549.1"/>
    <property type="molecule type" value="Genomic_DNA"/>
</dbReference>
<dbReference type="RefSeq" id="WP_012007640.1">
    <property type="nucleotide sequence ID" value="NC_009840.1"/>
</dbReference>
<dbReference type="SMR" id="A8G4L8"/>
<dbReference type="STRING" id="93060.P9215_09341"/>
<dbReference type="KEGG" id="pmh:P9215_09341"/>
<dbReference type="eggNOG" id="COG1968">
    <property type="taxonomic scope" value="Bacteria"/>
</dbReference>
<dbReference type="HOGENOM" id="CLU_060296_1_0_3"/>
<dbReference type="OrthoDB" id="9808289at2"/>
<dbReference type="Proteomes" id="UP000002014">
    <property type="component" value="Chromosome"/>
</dbReference>
<dbReference type="GO" id="GO:0005886">
    <property type="term" value="C:plasma membrane"/>
    <property type="evidence" value="ECO:0007669"/>
    <property type="project" value="UniProtKB-SubCell"/>
</dbReference>
<dbReference type="GO" id="GO:0050380">
    <property type="term" value="F:undecaprenyl-diphosphatase activity"/>
    <property type="evidence" value="ECO:0007669"/>
    <property type="project" value="UniProtKB-UniRule"/>
</dbReference>
<dbReference type="GO" id="GO:0071555">
    <property type="term" value="P:cell wall organization"/>
    <property type="evidence" value="ECO:0007669"/>
    <property type="project" value="UniProtKB-KW"/>
</dbReference>
<dbReference type="GO" id="GO:0009252">
    <property type="term" value="P:peptidoglycan biosynthetic process"/>
    <property type="evidence" value="ECO:0007669"/>
    <property type="project" value="UniProtKB-KW"/>
</dbReference>
<dbReference type="GO" id="GO:0008360">
    <property type="term" value="P:regulation of cell shape"/>
    <property type="evidence" value="ECO:0007669"/>
    <property type="project" value="UniProtKB-KW"/>
</dbReference>
<dbReference type="GO" id="GO:0046677">
    <property type="term" value="P:response to antibiotic"/>
    <property type="evidence" value="ECO:0007669"/>
    <property type="project" value="UniProtKB-UniRule"/>
</dbReference>
<dbReference type="HAMAP" id="MF_01006">
    <property type="entry name" value="Undec_diphosphatase"/>
    <property type="match status" value="1"/>
</dbReference>
<dbReference type="InterPro" id="IPR003824">
    <property type="entry name" value="UppP"/>
</dbReference>
<dbReference type="PANTHER" id="PTHR30622">
    <property type="entry name" value="UNDECAPRENYL-DIPHOSPHATASE"/>
    <property type="match status" value="1"/>
</dbReference>
<dbReference type="PANTHER" id="PTHR30622:SF4">
    <property type="entry name" value="UNDECAPRENYL-DIPHOSPHATASE"/>
    <property type="match status" value="1"/>
</dbReference>
<dbReference type="Pfam" id="PF02673">
    <property type="entry name" value="BacA"/>
    <property type="match status" value="1"/>
</dbReference>